<name>RECA_LEGPC</name>
<evidence type="ECO:0000255" key="1">
    <source>
        <dbReference type="HAMAP-Rule" id="MF_00268"/>
    </source>
</evidence>
<comment type="function">
    <text evidence="1">Can catalyze the hydrolysis of ATP in the presence of single-stranded DNA, the ATP-dependent uptake of single-stranded DNA by duplex DNA, and the ATP-dependent hybridization of homologous single-stranded DNAs. It interacts with LexA causing its activation and leading to its autocatalytic cleavage.</text>
</comment>
<comment type="subcellular location">
    <subcellularLocation>
        <location evidence="1">Cytoplasm</location>
    </subcellularLocation>
</comment>
<comment type="similarity">
    <text evidence="1">Belongs to the RecA family.</text>
</comment>
<feature type="chain" id="PRO_1000047940" description="Protein RecA">
    <location>
        <begin position="1"/>
        <end position="348"/>
    </location>
</feature>
<feature type="binding site" evidence="1">
    <location>
        <begin position="66"/>
        <end position="73"/>
    </location>
    <ligand>
        <name>ATP</name>
        <dbReference type="ChEBI" id="CHEBI:30616"/>
    </ligand>
</feature>
<proteinExistence type="inferred from homology"/>
<gene>
    <name evidence="1" type="primary">recA</name>
    <name type="ordered locus">LPC_1245</name>
</gene>
<dbReference type="EMBL" id="CP000675">
    <property type="protein sequence ID" value="ABQ55208.1"/>
    <property type="molecule type" value="Genomic_DNA"/>
</dbReference>
<dbReference type="RefSeq" id="WP_010947527.1">
    <property type="nucleotide sequence ID" value="NZ_JAPMSS010000005.1"/>
</dbReference>
<dbReference type="SMR" id="A5ICV8"/>
<dbReference type="GeneID" id="57035793"/>
<dbReference type="KEGG" id="lpc:LPC_1245"/>
<dbReference type="HOGENOM" id="CLU_040469_3_2_6"/>
<dbReference type="GO" id="GO:0005829">
    <property type="term" value="C:cytosol"/>
    <property type="evidence" value="ECO:0007669"/>
    <property type="project" value="TreeGrafter"/>
</dbReference>
<dbReference type="GO" id="GO:0005524">
    <property type="term" value="F:ATP binding"/>
    <property type="evidence" value="ECO:0007669"/>
    <property type="project" value="UniProtKB-UniRule"/>
</dbReference>
<dbReference type="GO" id="GO:0016887">
    <property type="term" value="F:ATP hydrolysis activity"/>
    <property type="evidence" value="ECO:0007669"/>
    <property type="project" value="InterPro"/>
</dbReference>
<dbReference type="GO" id="GO:0140664">
    <property type="term" value="F:ATP-dependent DNA damage sensor activity"/>
    <property type="evidence" value="ECO:0007669"/>
    <property type="project" value="InterPro"/>
</dbReference>
<dbReference type="GO" id="GO:0003684">
    <property type="term" value="F:damaged DNA binding"/>
    <property type="evidence" value="ECO:0007669"/>
    <property type="project" value="UniProtKB-UniRule"/>
</dbReference>
<dbReference type="GO" id="GO:0003697">
    <property type="term" value="F:single-stranded DNA binding"/>
    <property type="evidence" value="ECO:0007669"/>
    <property type="project" value="UniProtKB-UniRule"/>
</dbReference>
<dbReference type="GO" id="GO:0006310">
    <property type="term" value="P:DNA recombination"/>
    <property type="evidence" value="ECO:0007669"/>
    <property type="project" value="UniProtKB-UniRule"/>
</dbReference>
<dbReference type="GO" id="GO:0006281">
    <property type="term" value="P:DNA repair"/>
    <property type="evidence" value="ECO:0007669"/>
    <property type="project" value="UniProtKB-UniRule"/>
</dbReference>
<dbReference type="GO" id="GO:0009432">
    <property type="term" value="P:SOS response"/>
    <property type="evidence" value="ECO:0007669"/>
    <property type="project" value="UniProtKB-UniRule"/>
</dbReference>
<dbReference type="CDD" id="cd00983">
    <property type="entry name" value="RecA"/>
    <property type="match status" value="1"/>
</dbReference>
<dbReference type="FunFam" id="3.40.50.300:FF:000087">
    <property type="entry name" value="Recombinase RecA"/>
    <property type="match status" value="1"/>
</dbReference>
<dbReference type="Gene3D" id="3.40.50.300">
    <property type="entry name" value="P-loop containing nucleotide triphosphate hydrolases"/>
    <property type="match status" value="1"/>
</dbReference>
<dbReference type="HAMAP" id="MF_00268">
    <property type="entry name" value="RecA"/>
    <property type="match status" value="1"/>
</dbReference>
<dbReference type="InterPro" id="IPR003593">
    <property type="entry name" value="AAA+_ATPase"/>
</dbReference>
<dbReference type="InterPro" id="IPR013765">
    <property type="entry name" value="DNA_recomb/repair_RecA"/>
</dbReference>
<dbReference type="InterPro" id="IPR020584">
    <property type="entry name" value="DNA_recomb/repair_RecA_CS"/>
</dbReference>
<dbReference type="InterPro" id="IPR027417">
    <property type="entry name" value="P-loop_NTPase"/>
</dbReference>
<dbReference type="InterPro" id="IPR049261">
    <property type="entry name" value="RecA-like_C"/>
</dbReference>
<dbReference type="InterPro" id="IPR049428">
    <property type="entry name" value="RecA-like_N"/>
</dbReference>
<dbReference type="InterPro" id="IPR020588">
    <property type="entry name" value="RecA_ATP-bd"/>
</dbReference>
<dbReference type="InterPro" id="IPR023400">
    <property type="entry name" value="RecA_C_sf"/>
</dbReference>
<dbReference type="InterPro" id="IPR020587">
    <property type="entry name" value="RecA_monomer-monomer_interface"/>
</dbReference>
<dbReference type="NCBIfam" id="TIGR02012">
    <property type="entry name" value="tigrfam_recA"/>
    <property type="match status" value="1"/>
</dbReference>
<dbReference type="PANTHER" id="PTHR45900:SF1">
    <property type="entry name" value="MITOCHONDRIAL DNA REPAIR PROTEIN RECA HOMOLOG-RELATED"/>
    <property type="match status" value="1"/>
</dbReference>
<dbReference type="PANTHER" id="PTHR45900">
    <property type="entry name" value="RECA"/>
    <property type="match status" value="1"/>
</dbReference>
<dbReference type="Pfam" id="PF00154">
    <property type="entry name" value="RecA"/>
    <property type="match status" value="1"/>
</dbReference>
<dbReference type="Pfam" id="PF21096">
    <property type="entry name" value="RecA_C"/>
    <property type="match status" value="1"/>
</dbReference>
<dbReference type="PRINTS" id="PR00142">
    <property type="entry name" value="RECA"/>
</dbReference>
<dbReference type="SMART" id="SM00382">
    <property type="entry name" value="AAA"/>
    <property type="match status" value="1"/>
</dbReference>
<dbReference type="SUPFAM" id="SSF52540">
    <property type="entry name" value="P-loop containing nucleoside triphosphate hydrolases"/>
    <property type="match status" value="1"/>
</dbReference>
<dbReference type="SUPFAM" id="SSF54752">
    <property type="entry name" value="RecA protein, C-terminal domain"/>
    <property type="match status" value="1"/>
</dbReference>
<dbReference type="PROSITE" id="PS00321">
    <property type="entry name" value="RECA_1"/>
    <property type="match status" value="1"/>
</dbReference>
<dbReference type="PROSITE" id="PS50162">
    <property type="entry name" value="RECA_2"/>
    <property type="match status" value="1"/>
</dbReference>
<dbReference type="PROSITE" id="PS50163">
    <property type="entry name" value="RECA_3"/>
    <property type="match status" value="1"/>
</dbReference>
<accession>A5ICV8</accession>
<keyword id="KW-0067">ATP-binding</keyword>
<keyword id="KW-0963">Cytoplasm</keyword>
<keyword id="KW-0227">DNA damage</keyword>
<keyword id="KW-0233">DNA recombination</keyword>
<keyword id="KW-0234">DNA repair</keyword>
<keyword id="KW-0238">DNA-binding</keyword>
<keyword id="KW-0547">Nucleotide-binding</keyword>
<keyword id="KW-0742">SOS response</keyword>
<protein>
    <recommendedName>
        <fullName evidence="1">Protein RecA</fullName>
    </recommendedName>
    <alternativeName>
        <fullName evidence="1">Recombinase A</fullName>
    </alternativeName>
</protein>
<sequence length="348" mass="37949">MEENKQKALSAALSQIERQFGKGSVMRMGDSTVSRDIEAISTGSLGLDIALGIGGLPKGRIVEIYGPESSGKTTLTLQVIAECQKMGGTAAFIDAEHALDPSYAQKLGVKVDELLVSQPDTGEQALEITDMLVRSAAVDVVIIDSVAALTPKAEIEGEMGDSHVGLQARLMSQALRKLTANIKRSNTLVIFINQIRMKIGVMFGSPETTTGGNALKFYASVRLDIRRIGSIKKGEEILGSETRVKVVKNKVAPPFKMTEFDILYNEGISRESEIINLGVQLNLIEKSGAWYSYKQEKIGQGKENVRLYLKENPQVAAELEQQIRTELLEKKLSVLASSSEDLFETIDD</sequence>
<organism>
    <name type="scientific">Legionella pneumophila (strain Corby)</name>
    <dbReference type="NCBI Taxonomy" id="400673"/>
    <lineage>
        <taxon>Bacteria</taxon>
        <taxon>Pseudomonadati</taxon>
        <taxon>Pseudomonadota</taxon>
        <taxon>Gammaproteobacteria</taxon>
        <taxon>Legionellales</taxon>
        <taxon>Legionellaceae</taxon>
        <taxon>Legionella</taxon>
    </lineage>
</organism>
<reference key="1">
    <citation type="submission" date="2006-11" db="EMBL/GenBank/DDBJ databases">
        <title>Identification and characterization of a new conjugation/ type IVA secretion system (trb/tra) of L. pneumophila Corby localized on a mobile genomic island.</title>
        <authorList>
            <person name="Gloeckner G."/>
            <person name="Albert-Weissenberger C."/>
            <person name="Weinmann E."/>
            <person name="Jacobi S."/>
            <person name="Schunder E."/>
            <person name="Steinert M."/>
            <person name="Buchrieser C."/>
            <person name="Hacker J."/>
            <person name="Heuner K."/>
        </authorList>
    </citation>
    <scope>NUCLEOTIDE SEQUENCE [LARGE SCALE GENOMIC DNA]</scope>
    <source>
        <strain>Corby</strain>
    </source>
</reference>